<feature type="chain" id="PRO_1000055321" description="Large ribosomal subunit protein uL6">
    <location>
        <begin position="1"/>
        <end position="178"/>
    </location>
</feature>
<keyword id="KW-0687">Ribonucleoprotein</keyword>
<keyword id="KW-0689">Ribosomal protein</keyword>
<keyword id="KW-0694">RNA-binding</keyword>
<keyword id="KW-0699">rRNA-binding</keyword>
<protein>
    <recommendedName>
        <fullName evidence="1">Large ribosomal subunit protein uL6</fullName>
    </recommendedName>
    <alternativeName>
        <fullName evidence="2">50S ribosomal protein L6</fullName>
    </alternativeName>
</protein>
<organism>
    <name type="scientific">Sulfurovum sp. (strain NBC37-1)</name>
    <dbReference type="NCBI Taxonomy" id="387093"/>
    <lineage>
        <taxon>Bacteria</taxon>
        <taxon>Pseudomonadati</taxon>
        <taxon>Campylobacterota</taxon>
        <taxon>Epsilonproteobacteria</taxon>
        <taxon>Campylobacterales</taxon>
        <taxon>Sulfurovaceae</taxon>
        <taxon>Sulfurovum</taxon>
    </lineage>
</organism>
<accession>A6QCR3</accession>
<gene>
    <name evidence="1" type="primary">rplF</name>
    <name type="ordered locus">SUN_2336</name>
</gene>
<name>RL6_SULNB</name>
<proteinExistence type="inferred from homology"/>
<evidence type="ECO:0000255" key="1">
    <source>
        <dbReference type="HAMAP-Rule" id="MF_01365"/>
    </source>
</evidence>
<evidence type="ECO:0000305" key="2"/>
<sequence>MSRIGKRPVTVPSGIEVSLDGTTLVAKKGNLEKRLETHGRVGINIDGSEVTFTRVGDEKQDAAFWGTYRALFNNIMVGLDKGYSKSLEINGVGYRAAVEGKTLKLQLGFSHDVNFEIPEGLDIKVDKNIITVSGTDKQAVGQAAAEIRAYRPPEPYKGKGVKYTDEVIIRKAGKAAGK</sequence>
<dbReference type="EMBL" id="AP009179">
    <property type="protein sequence ID" value="BAF73272.1"/>
    <property type="molecule type" value="Genomic_DNA"/>
</dbReference>
<dbReference type="RefSeq" id="WP_012084113.1">
    <property type="nucleotide sequence ID" value="NC_009663.1"/>
</dbReference>
<dbReference type="SMR" id="A6QCR3"/>
<dbReference type="STRING" id="387093.SUN_2336"/>
<dbReference type="KEGG" id="sun:SUN_2336"/>
<dbReference type="eggNOG" id="COG0097">
    <property type="taxonomic scope" value="Bacteria"/>
</dbReference>
<dbReference type="HOGENOM" id="CLU_065464_1_2_7"/>
<dbReference type="OrthoDB" id="9805007at2"/>
<dbReference type="Proteomes" id="UP000006378">
    <property type="component" value="Chromosome"/>
</dbReference>
<dbReference type="GO" id="GO:0022625">
    <property type="term" value="C:cytosolic large ribosomal subunit"/>
    <property type="evidence" value="ECO:0007669"/>
    <property type="project" value="TreeGrafter"/>
</dbReference>
<dbReference type="GO" id="GO:0019843">
    <property type="term" value="F:rRNA binding"/>
    <property type="evidence" value="ECO:0007669"/>
    <property type="project" value="UniProtKB-UniRule"/>
</dbReference>
<dbReference type="GO" id="GO:0003735">
    <property type="term" value="F:structural constituent of ribosome"/>
    <property type="evidence" value="ECO:0007669"/>
    <property type="project" value="InterPro"/>
</dbReference>
<dbReference type="GO" id="GO:0002181">
    <property type="term" value="P:cytoplasmic translation"/>
    <property type="evidence" value="ECO:0007669"/>
    <property type="project" value="TreeGrafter"/>
</dbReference>
<dbReference type="FunFam" id="3.90.930.12:FF:000001">
    <property type="entry name" value="50S ribosomal protein L6"/>
    <property type="match status" value="1"/>
</dbReference>
<dbReference type="Gene3D" id="3.90.930.12">
    <property type="entry name" value="Ribosomal protein L6, alpha-beta domain"/>
    <property type="match status" value="2"/>
</dbReference>
<dbReference type="HAMAP" id="MF_01365_B">
    <property type="entry name" value="Ribosomal_uL6_B"/>
    <property type="match status" value="1"/>
</dbReference>
<dbReference type="InterPro" id="IPR000702">
    <property type="entry name" value="Ribosomal_uL6-like"/>
</dbReference>
<dbReference type="InterPro" id="IPR036789">
    <property type="entry name" value="Ribosomal_uL6-like_a/b-dom_sf"/>
</dbReference>
<dbReference type="InterPro" id="IPR020040">
    <property type="entry name" value="Ribosomal_uL6_a/b-dom"/>
</dbReference>
<dbReference type="InterPro" id="IPR019906">
    <property type="entry name" value="Ribosomal_uL6_bac-type"/>
</dbReference>
<dbReference type="InterPro" id="IPR002358">
    <property type="entry name" value="Ribosomal_uL6_CS"/>
</dbReference>
<dbReference type="NCBIfam" id="TIGR03654">
    <property type="entry name" value="L6_bact"/>
    <property type="match status" value="1"/>
</dbReference>
<dbReference type="PANTHER" id="PTHR11655">
    <property type="entry name" value="60S/50S RIBOSOMAL PROTEIN L6/L9"/>
    <property type="match status" value="1"/>
</dbReference>
<dbReference type="PANTHER" id="PTHR11655:SF14">
    <property type="entry name" value="LARGE RIBOSOMAL SUBUNIT PROTEIN UL6M"/>
    <property type="match status" value="1"/>
</dbReference>
<dbReference type="Pfam" id="PF00347">
    <property type="entry name" value="Ribosomal_L6"/>
    <property type="match status" value="1"/>
</dbReference>
<dbReference type="PIRSF" id="PIRSF002162">
    <property type="entry name" value="Ribosomal_L6"/>
    <property type="match status" value="1"/>
</dbReference>
<dbReference type="PRINTS" id="PR00059">
    <property type="entry name" value="RIBOSOMALL6"/>
</dbReference>
<dbReference type="SUPFAM" id="SSF56053">
    <property type="entry name" value="Ribosomal protein L6"/>
    <property type="match status" value="2"/>
</dbReference>
<dbReference type="PROSITE" id="PS00525">
    <property type="entry name" value="RIBOSOMAL_L6_1"/>
    <property type="match status" value="1"/>
</dbReference>
<comment type="function">
    <text evidence="1">This protein binds to the 23S rRNA, and is important in its secondary structure. It is located near the subunit interface in the base of the L7/L12 stalk, and near the tRNA binding site of the peptidyltransferase center.</text>
</comment>
<comment type="subunit">
    <text evidence="1">Part of the 50S ribosomal subunit.</text>
</comment>
<comment type="similarity">
    <text evidence="1">Belongs to the universal ribosomal protein uL6 family.</text>
</comment>
<reference key="1">
    <citation type="journal article" date="2007" name="Proc. Natl. Acad. Sci. U.S.A.">
        <title>Deep-sea vent epsilon-proteobacterial genomes provide insights into emergence of pathogens.</title>
        <authorList>
            <person name="Nakagawa S."/>
            <person name="Takaki Y."/>
            <person name="Shimamura S."/>
            <person name="Reysenbach A.-L."/>
            <person name="Takai K."/>
            <person name="Horikoshi K."/>
        </authorList>
    </citation>
    <scope>NUCLEOTIDE SEQUENCE [LARGE SCALE GENOMIC DNA]</scope>
    <source>
        <strain>NBC37-1</strain>
    </source>
</reference>